<proteinExistence type="inferred from homology"/>
<evidence type="ECO:0000255" key="1">
    <source>
        <dbReference type="HAMAP-Rule" id="MF_00008"/>
    </source>
</evidence>
<organism>
    <name type="scientific">Halorhodospira halophila (strain DSM 244 / SL1)</name>
    <name type="common">Ectothiorhodospira halophila (strain DSM 244 / SL1)</name>
    <dbReference type="NCBI Taxonomy" id="349124"/>
    <lineage>
        <taxon>Bacteria</taxon>
        <taxon>Pseudomonadati</taxon>
        <taxon>Pseudomonadota</taxon>
        <taxon>Gammaproteobacteria</taxon>
        <taxon>Chromatiales</taxon>
        <taxon>Ectothiorhodospiraceae</taxon>
        <taxon>Halorhodospira</taxon>
    </lineage>
</organism>
<comment type="function">
    <text evidence="1">Catalyzes the reductive methylation of 2'-deoxyuridine-5'-monophosphate (dUMP) to 2'-deoxythymidine-5'-monophosphate (dTMP) while utilizing 5,10-methylenetetrahydrofolate (mTHF) as the methyl donor and reductant in the reaction, yielding dihydrofolate (DHF) as a by-product. This enzymatic reaction provides an intracellular de novo source of dTMP, an essential precursor for DNA biosynthesis.</text>
</comment>
<comment type="catalytic activity">
    <reaction evidence="1">
        <text>dUMP + (6R)-5,10-methylene-5,6,7,8-tetrahydrofolate = 7,8-dihydrofolate + dTMP</text>
        <dbReference type="Rhea" id="RHEA:12104"/>
        <dbReference type="ChEBI" id="CHEBI:15636"/>
        <dbReference type="ChEBI" id="CHEBI:57451"/>
        <dbReference type="ChEBI" id="CHEBI:63528"/>
        <dbReference type="ChEBI" id="CHEBI:246422"/>
        <dbReference type="EC" id="2.1.1.45"/>
    </reaction>
</comment>
<comment type="pathway">
    <text evidence="1">Pyrimidine metabolism; dTTP biosynthesis.</text>
</comment>
<comment type="subunit">
    <text evidence="1">Homodimer.</text>
</comment>
<comment type="subcellular location">
    <subcellularLocation>
        <location evidence="1">Cytoplasm</location>
    </subcellularLocation>
</comment>
<comment type="similarity">
    <text evidence="1">Belongs to the thymidylate synthase family. Bacterial-type ThyA subfamily.</text>
</comment>
<sequence>MRAYLDLVQHVLEHGHRKEDRTGTGTLSVFGHQMRFDLEAGFPLVTTKRVFWRGVAEELLWFIRGSTNARELEDKGVRIWSPWADPDGELGPVYGAQWRSWRAADGREIDQLQQVLTELRQRPDSRRHLVSAWNVGELERMNLPPCHLLFQFYVAEGRLSCQLYQRSADLFLGVPFNIASYSLLTHLVARHVGLEVGEFIWTGGDCHLYLNHLAQAREQLSRAPRPLPTLHIDPGVTDLFAVRYEHLRLAGYDPHPKLTAPVAV</sequence>
<keyword id="KW-0963">Cytoplasm</keyword>
<keyword id="KW-0489">Methyltransferase</keyword>
<keyword id="KW-0545">Nucleotide biosynthesis</keyword>
<keyword id="KW-1185">Reference proteome</keyword>
<keyword id="KW-0808">Transferase</keyword>
<dbReference type="EC" id="2.1.1.45" evidence="1"/>
<dbReference type="EMBL" id="CP000544">
    <property type="protein sequence ID" value="ABM62811.1"/>
    <property type="molecule type" value="Genomic_DNA"/>
</dbReference>
<dbReference type="RefSeq" id="WP_011814833.1">
    <property type="nucleotide sequence ID" value="NC_008789.1"/>
</dbReference>
<dbReference type="SMR" id="A1WYP9"/>
<dbReference type="STRING" id="349124.Hhal_2047"/>
<dbReference type="KEGG" id="hha:Hhal_2047"/>
<dbReference type="eggNOG" id="COG0207">
    <property type="taxonomic scope" value="Bacteria"/>
</dbReference>
<dbReference type="HOGENOM" id="CLU_021669_0_0_6"/>
<dbReference type="OrthoDB" id="9774633at2"/>
<dbReference type="UniPathway" id="UPA00575"/>
<dbReference type="Proteomes" id="UP000000647">
    <property type="component" value="Chromosome"/>
</dbReference>
<dbReference type="GO" id="GO:0005829">
    <property type="term" value="C:cytosol"/>
    <property type="evidence" value="ECO:0007669"/>
    <property type="project" value="TreeGrafter"/>
</dbReference>
<dbReference type="GO" id="GO:0004799">
    <property type="term" value="F:thymidylate synthase activity"/>
    <property type="evidence" value="ECO:0007669"/>
    <property type="project" value="UniProtKB-UniRule"/>
</dbReference>
<dbReference type="GO" id="GO:0006231">
    <property type="term" value="P:dTMP biosynthetic process"/>
    <property type="evidence" value="ECO:0007669"/>
    <property type="project" value="UniProtKB-UniRule"/>
</dbReference>
<dbReference type="GO" id="GO:0006235">
    <property type="term" value="P:dTTP biosynthetic process"/>
    <property type="evidence" value="ECO:0007669"/>
    <property type="project" value="UniProtKB-UniRule"/>
</dbReference>
<dbReference type="GO" id="GO:0032259">
    <property type="term" value="P:methylation"/>
    <property type="evidence" value="ECO:0007669"/>
    <property type="project" value="UniProtKB-KW"/>
</dbReference>
<dbReference type="CDD" id="cd00351">
    <property type="entry name" value="TS_Pyrimidine_HMase"/>
    <property type="match status" value="1"/>
</dbReference>
<dbReference type="FunFam" id="3.30.572.10:FF:000013">
    <property type="entry name" value="Thymidylate synthase"/>
    <property type="match status" value="1"/>
</dbReference>
<dbReference type="Gene3D" id="3.30.572.10">
    <property type="entry name" value="Thymidylate synthase/dCMP hydroxymethylase domain"/>
    <property type="match status" value="1"/>
</dbReference>
<dbReference type="HAMAP" id="MF_00008">
    <property type="entry name" value="Thymidy_synth_bact"/>
    <property type="match status" value="1"/>
</dbReference>
<dbReference type="InterPro" id="IPR045097">
    <property type="entry name" value="Thymidate_synth/dCMP_Mease"/>
</dbReference>
<dbReference type="InterPro" id="IPR023451">
    <property type="entry name" value="Thymidate_synth/dCMP_Mease_dom"/>
</dbReference>
<dbReference type="InterPro" id="IPR036926">
    <property type="entry name" value="Thymidate_synth/dCMP_Mease_sf"/>
</dbReference>
<dbReference type="InterPro" id="IPR000398">
    <property type="entry name" value="Thymidylate_synthase"/>
</dbReference>
<dbReference type="InterPro" id="IPR020940">
    <property type="entry name" value="Thymidylate_synthase_AS"/>
</dbReference>
<dbReference type="NCBIfam" id="NF002497">
    <property type="entry name" value="PRK01827.1-3"/>
    <property type="match status" value="1"/>
</dbReference>
<dbReference type="NCBIfam" id="NF002499">
    <property type="entry name" value="PRK01827.1-5"/>
    <property type="match status" value="1"/>
</dbReference>
<dbReference type="NCBIfam" id="TIGR03284">
    <property type="entry name" value="thym_sym"/>
    <property type="match status" value="2"/>
</dbReference>
<dbReference type="PANTHER" id="PTHR11548:SF9">
    <property type="entry name" value="THYMIDYLATE SYNTHASE"/>
    <property type="match status" value="1"/>
</dbReference>
<dbReference type="PANTHER" id="PTHR11548">
    <property type="entry name" value="THYMIDYLATE SYNTHASE 1"/>
    <property type="match status" value="1"/>
</dbReference>
<dbReference type="Pfam" id="PF00303">
    <property type="entry name" value="Thymidylat_synt"/>
    <property type="match status" value="1"/>
</dbReference>
<dbReference type="PRINTS" id="PR00108">
    <property type="entry name" value="THYMDSNTHASE"/>
</dbReference>
<dbReference type="SUPFAM" id="SSF55831">
    <property type="entry name" value="Thymidylate synthase/dCMP hydroxymethylase"/>
    <property type="match status" value="1"/>
</dbReference>
<dbReference type="PROSITE" id="PS00091">
    <property type="entry name" value="THYMIDYLATE_SYNTHASE"/>
    <property type="match status" value="1"/>
</dbReference>
<reference key="1">
    <citation type="submission" date="2006-12" db="EMBL/GenBank/DDBJ databases">
        <title>Complete sequence of Halorhodospira halophila SL1.</title>
        <authorList>
            <consortium name="US DOE Joint Genome Institute"/>
            <person name="Copeland A."/>
            <person name="Lucas S."/>
            <person name="Lapidus A."/>
            <person name="Barry K."/>
            <person name="Detter J.C."/>
            <person name="Glavina del Rio T."/>
            <person name="Hammon N."/>
            <person name="Israni S."/>
            <person name="Dalin E."/>
            <person name="Tice H."/>
            <person name="Pitluck S."/>
            <person name="Saunders E."/>
            <person name="Brettin T."/>
            <person name="Bruce D."/>
            <person name="Han C."/>
            <person name="Tapia R."/>
            <person name="Schmutz J."/>
            <person name="Larimer F."/>
            <person name="Land M."/>
            <person name="Hauser L."/>
            <person name="Kyrpides N."/>
            <person name="Mikhailova N."/>
            <person name="Hoff W."/>
            <person name="Richardson P."/>
        </authorList>
    </citation>
    <scope>NUCLEOTIDE SEQUENCE [LARGE SCALE GENOMIC DNA]</scope>
    <source>
        <strain>DSM 244 / SL1</strain>
    </source>
</reference>
<name>TYSY_HALHL</name>
<gene>
    <name evidence="1" type="primary">thyA</name>
    <name type="ordered locus">Hhal_2047</name>
</gene>
<accession>A1WYP9</accession>
<feature type="chain" id="PRO_1000000609" description="Thymidylate synthase">
    <location>
        <begin position="1"/>
        <end position="264"/>
    </location>
</feature>
<feature type="active site" description="Nucleophile" evidence="1">
    <location>
        <position position="146"/>
    </location>
</feature>
<feature type="binding site" description="in other chain" evidence="1">
    <location>
        <position position="21"/>
    </location>
    <ligand>
        <name>dUMP</name>
        <dbReference type="ChEBI" id="CHEBI:246422"/>
        <note>ligand shared between dimeric partners</note>
    </ligand>
</feature>
<feature type="binding site" evidence="1">
    <location>
        <begin position="126"/>
        <end position="127"/>
    </location>
    <ligand>
        <name>dUMP</name>
        <dbReference type="ChEBI" id="CHEBI:246422"/>
        <note>ligand shared between dimeric partners</note>
    </ligand>
</feature>
<feature type="binding site" description="in other chain" evidence="1">
    <location>
        <begin position="166"/>
        <end position="169"/>
    </location>
    <ligand>
        <name>dUMP</name>
        <dbReference type="ChEBI" id="CHEBI:246422"/>
        <note>ligand shared between dimeric partners</note>
    </ligand>
</feature>
<feature type="binding site" evidence="1">
    <location>
        <position position="169"/>
    </location>
    <ligand>
        <name>(6R)-5,10-methylene-5,6,7,8-tetrahydrofolate</name>
        <dbReference type="ChEBI" id="CHEBI:15636"/>
    </ligand>
</feature>
<feature type="binding site" description="in other chain" evidence="1">
    <location>
        <position position="177"/>
    </location>
    <ligand>
        <name>dUMP</name>
        <dbReference type="ChEBI" id="CHEBI:246422"/>
        <note>ligand shared between dimeric partners</note>
    </ligand>
</feature>
<feature type="binding site" description="in other chain" evidence="1">
    <location>
        <begin position="207"/>
        <end position="209"/>
    </location>
    <ligand>
        <name>dUMP</name>
        <dbReference type="ChEBI" id="CHEBI:246422"/>
        <note>ligand shared between dimeric partners</note>
    </ligand>
</feature>
<feature type="binding site" evidence="1">
    <location>
        <position position="263"/>
    </location>
    <ligand>
        <name>(6R)-5,10-methylene-5,6,7,8-tetrahydrofolate</name>
        <dbReference type="ChEBI" id="CHEBI:15636"/>
    </ligand>
</feature>
<protein>
    <recommendedName>
        <fullName evidence="1">Thymidylate synthase</fullName>
        <shortName evidence="1">TS</shortName>
        <shortName evidence="1">TSase</shortName>
        <ecNumber evidence="1">2.1.1.45</ecNumber>
    </recommendedName>
</protein>